<protein>
    <recommendedName>
        <fullName evidence="9">cGAMP-activated phospholipase</fullName>
        <ecNumber evidence="2">3.1.1.-</ecNumber>
        <ecNumber evidence="3">3.1.1.32</ecNumber>
    </recommendedName>
    <alternativeName>
        <fullName evidence="13">3',3'-cGAMP receptor CapV</fullName>
    </alternativeName>
    <alternativeName>
        <fullName evidence="9">Patatin-like phospholipase</fullName>
    </alternativeName>
</protein>
<proteinExistence type="evidence at protein level"/>
<feature type="chain" id="PRO_0000447706" description="cGAMP-activated phospholipase">
    <location>
        <begin position="1"/>
        <end position="355"/>
    </location>
</feature>
<feature type="domain" description="PNPLA" evidence="1">
    <location>
        <begin position="17"/>
        <end position="214"/>
    </location>
</feature>
<feature type="short sequence motif" description="GXGXXG" evidence="1">
    <location>
        <begin position="21"/>
        <end position="26"/>
    </location>
</feature>
<feature type="short sequence motif" description="GXSXG" evidence="1">
    <location>
        <begin position="60"/>
        <end position="64"/>
    </location>
</feature>
<feature type="short sequence motif" description="DGA/G" evidence="1">
    <location>
        <begin position="201"/>
        <end position="203"/>
    </location>
</feature>
<feature type="active site" description="Nucleophile" evidence="1">
    <location>
        <position position="62"/>
    </location>
</feature>
<feature type="active site" description="Proton acceptor" evidence="1">
    <location>
        <position position="201"/>
    </location>
</feature>
<feature type="mutagenesis site" description="Loss of catalytic activity. Loss of defense against phages P1, T2, T4, T5 or T6." evidence="2 7 8">
    <original>S</original>
    <variation>A</variation>
    <location>
        <position position="62"/>
    </location>
</feature>
<sequence>MPNPPEYEHLKNQVRILSLNGGGARGLFTISLLAEIERIIEEKQGINGFKVGDYFDLITGTSIGGILALGLAYGKSARELEDVFRKQAGYIFPEQKYPRFFPVFRRRYRLARGPLYDSKPLAKTIASMVGEESTFNDLKCRVLIPTVNLSTGKPQFFKTPHNPEFHRDGRIKLIDAALATSAAPTYFAPHYCVDLDSYFADGGLVANNPSFIGLHEVFRDMATDFPEAKVSDVKILNVGTLGEEYSLSPSSLAGKSGYLGLWGMGERLVLSAMAANQELHKAMLLREFATHDAIGNFVRLDNNIPHEAASDITLDNASASSLSNLASRGRQLATEEFTKNKALADFFKVPARKFK</sequence>
<reference key="1">
    <citation type="journal article" date="2000" name="Nature">
        <title>DNA sequence of both chromosomes of the cholera pathogen Vibrio cholerae.</title>
        <authorList>
            <person name="Heidelberg J.F."/>
            <person name="Eisen J.A."/>
            <person name="Nelson W.C."/>
            <person name="Clayton R.A."/>
            <person name="Gwinn M.L."/>
            <person name="Dodson R.J."/>
            <person name="Haft D.H."/>
            <person name="Hickey E.K."/>
            <person name="Peterson J.D."/>
            <person name="Umayam L.A."/>
            <person name="Gill S.R."/>
            <person name="Nelson K.E."/>
            <person name="Read T.D."/>
            <person name="Tettelin H."/>
            <person name="Richardson D.L."/>
            <person name="Ermolaeva M.D."/>
            <person name="Vamathevan J.J."/>
            <person name="Bass S."/>
            <person name="Qin H."/>
            <person name="Dragoi I."/>
            <person name="Sellers P."/>
            <person name="McDonald L.A."/>
            <person name="Utterback T.R."/>
            <person name="Fleischmann R.D."/>
            <person name="Nierman W.C."/>
            <person name="White O."/>
            <person name="Salzberg S.L."/>
            <person name="Smith H.O."/>
            <person name="Colwell R.R."/>
            <person name="Mekalanos J.J."/>
            <person name="Venter J.C."/>
            <person name="Fraser C.M."/>
        </authorList>
    </citation>
    <scope>NUCLEOTIDE SEQUENCE [LARGE SCALE GENOMIC DNA]</scope>
    <source>
        <strain>ATCC 39315 / El Tor Inaba N16961</strain>
    </source>
</reference>
<reference key="2">
    <citation type="journal article" date="2018" name="Proc. Natl. Acad. Sci. U.S.A.">
        <title>Direct activation of a phospholipase by cyclic GMP-AMP in El Tor Vibrio cholerae.</title>
        <authorList>
            <person name="Severin G.B."/>
            <person name="Ramliden M.S."/>
            <person name="Hawver L.A."/>
            <person name="Wang K."/>
            <person name="Pell M.E."/>
            <person name="Kieninger A.K."/>
            <person name="Khataokar A."/>
            <person name="O'Hara B.J."/>
            <person name="Behrmann L.V."/>
            <person name="Neiditch M.B."/>
            <person name="Benning C."/>
            <person name="Waters C.M."/>
            <person name="Ng W.L."/>
        </authorList>
    </citation>
    <scope>FUNCTION</scope>
    <scope>CATALYTIC ACTIVITY</scope>
    <scope>ACTIVITY REGULATION</scope>
    <scope>DISRUPTION PHENOTYPE</scope>
    <scope>MUTAGENESIS OF SER-62</scope>
</reference>
<reference key="3">
    <citation type="journal article" date="2019" name="Nature">
        <title>Bacterial cGAS-like enzymes synthesize diverse nucleotide signals.</title>
        <authorList>
            <person name="Whiteley A.T."/>
            <person name="Eaglesham J.B."/>
            <person name="de Oliveira Mann C.C."/>
            <person name="Morehouse B.R."/>
            <person name="Lowey B."/>
            <person name="Nieminen E.A."/>
            <person name="Danilchanka O."/>
            <person name="King D.S."/>
            <person name="Lee A.S.Y."/>
            <person name="Mekalanos J.J."/>
            <person name="Kranzusch P.J."/>
        </authorList>
    </citation>
    <scope>FUNCTION</scope>
    <scope>CATALYTIC ACTIVITY</scope>
    <scope>ACTIVITY REGULATION</scope>
    <scope>NOMENCLATURE</scope>
    <scope>SIMILARITY</scope>
</reference>
<reference key="4">
    <citation type="journal article" date="2019" name="Nature">
        <title>Cyclic GMP-AMP signalling protects bacteria against viral infection.</title>
        <authorList>
            <person name="Cohen D."/>
            <person name="Melamed S."/>
            <person name="Millman A."/>
            <person name="Shulman G."/>
            <person name="Oppenheimer-Shaanan Y."/>
            <person name="Kacen A."/>
            <person name="Doron S."/>
            <person name="Amitai G."/>
            <person name="Sorek R."/>
        </authorList>
    </citation>
    <scope>ANTIVIRAL DEFENSE</scope>
    <scope>OPERON STRUCTURE</scope>
    <source>
        <strain>ATCC 39315 / El Tor Inaba N16961</strain>
    </source>
</reference>
<reference key="5">
    <citation type="journal article" date="2020" name="Cell">
        <title>CBASS immunity uses CARF-related effectors to sense 3'-5' and 2'-5'-linked cyclic oligonucleotide signals and protect bacteria from phage infection.</title>
        <authorList>
            <person name="Lowey B."/>
            <person name="Whiteley A.T."/>
            <person name="Keszei A.F.A."/>
            <person name="Morehouse B.R."/>
            <person name="Antine S.P."/>
            <person name="Cabrera V.J."/>
            <person name="Kashin D."/>
            <person name="Schwede F."/>
            <person name="Mekalanos J.J."/>
            <person name="Shao S."/>
            <person name="Lee A.S.Y."/>
            <person name="Kranzusch P.J."/>
        </authorList>
    </citation>
    <scope>ANTIVIRAL DEFENSE</scope>
    <scope>OPERON STRUCTURE</scope>
    <source>
        <strain>El Tor C6706</strain>
    </source>
</reference>
<reference key="6">
    <citation type="journal article" date="2020" name="Nat. Microbiol.">
        <title>Diversity and classification of cyclic-oligonucleotide-based anti-phage signalling systems.</title>
        <authorList>
            <person name="Millman A."/>
            <person name="Melamed S."/>
            <person name="Amitai G."/>
            <person name="Sorek R."/>
        </authorList>
    </citation>
    <scope>CLASSIFICATION AND NOMENCLATURE</scope>
</reference>
<reference key="7">
    <citation type="journal article" date="2021" name="Mol. Cell">
        <title>Effector-mediated membrane disruption controls cell death in CBASS antiphage defense.</title>
        <authorList>
            <person name="Duncan-Lowey B."/>
            <person name="McNamara-Bordewick N.K."/>
            <person name="Tal N."/>
            <person name="Sorek R."/>
            <person name="Kranzusch P.J."/>
        </authorList>
    </citation>
    <scope>FUNCTION</scope>
</reference>
<reference key="8">
    <citation type="journal article" date="2023" name="Nature">
        <title>An E1-E2 fusion protein primes antiviral immune signalling in bacteria.</title>
        <authorList>
            <person name="Ledvina H.E."/>
            <person name="Ye Q."/>
            <person name="Gu Y."/>
            <person name="Sullivan A.E."/>
            <person name="Quan Y."/>
            <person name="Lau R.K."/>
            <person name="Zhou H."/>
            <person name="Corbett K.D."/>
            <person name="Whiteley A.T."/>
        </authorList>
    </citation>
    <scope>ANTIVIRAL DEFENSE</scope>
    <scope>MUTAGENESIS OF SER-62</scope>
    <source>
        <strain>El Tor C6706</strain>
    </source>
</reference>
<reference key="9">
    <citation type="journal article" date="2023" name="Nature">
        <title>Ubiquitin-like conjugation by bacterial cGAS enhances anti-phage defence.</title>
        <authorList>
            <person name="Jenson J.M."/>
            <person name="Li T."/>
            <person name="Du F."/>
            <person name="Ea C.K."/>
            <person name="Chen Z.J."/>
        </authorList>
    </citation>
    <scope>FUNCTION AS A PHOSPHOLIPASE</scope>
    <scope>ACTIVITY REGULATION</scope>
    <scope>ANTIVIRAL DEFENSE</scope>
    <scope>MUTAGENESIS OF SER-62</scope>
    <source>
        <strain>El Tor C6706</strain>
    </source>
</reference>
<organism>
    <name type="scientific">Vibrio cholerae serotype O1 (strain ATCC 39315 / El Tor Inaba N16961)</name>
    <dbReference type="NCBI Taxonomy" id="243277"/>
    <lineage>
        <taxon>Bacteria</taxon>
        <taxon>Pseudomonadati</taxon>
        <taxon>Pseudomonadota</taxon>
        <taxon>Gammaproteobacteria</taxon>
        <taxon>Vibrionales</taxon>
        <taxon>Vibrionaceae</taxon>
        <taxon>Vibrio</taxon>
    </lineage>
</organism>
<keyword id="KW-0051">Antiviral defense</keyword>
<keyword id="KW-0378">Hydrolase</keyword>
<keyword id="KW-0442">Lipid degradation</keyword>
<keyword id="KW-0443">Lipid metabolism</keyword>
<keyword id="KW-1185">Reference proteome</keyword>
<name>CAPV_VIBCH</name>
<comment type="function">
    <text evidence="2 3 4 5 7 11">Effector phospholipase of a CBASS antiviral system (PubMed:29891656, PubMed:30787435). CBASS (cyclic oligonucleotide-based antiphage signaling system) provides immunity against bacteriophages. The CD-NTase protein (DncV) synthesizes cyclic nucleotides in response to infection; these serve as specific second messenger signals. The signals activate a diverse range of effectors, leading to bacterial cell death and thus abortive phage infection (PubMed:31533127, PubMed:32544385, PubMed:36755092). A type II-A(GA) CBASS system (PubMed:32839535).</text>
</comment>
<comment type="function">
    <text evidence="2 3 6">Phospholipase that is activated upon binding to the cyclic dinucleotide (CDN) second messenger 3',3'-cyclic GMP-AMP (3',3'-cGAMP) (PubMed:29891656, PubMed:30787435). Then degrades phosphatidylethanolamine (PE) and phosphatidylglycerol (PG), the major phospholipids in the cell membrane of V.cholerae, releasing 16:1 and 18:1 free fatty acids (PubMed:29891656). Upon expression in E.coli with cognate DncV, the cell inner membrane shrinks and separates from the cell wall (PubMed:34784509).</text>
</comment>
<comment type="function">
    <text evidence="4 5 7 8">Protects E.coli against phage infection. When the CBASS operon (capV-dncV-cap2-cap3) is introduced in E.coli MG1655 there is about 100-fold protection against phages P1 and T2 (PubMed:31533127). When the operon is introduced in E.coli MG1655 there is a more than 10(3) decrease in the efficiency of T2 plaque formation. Protects 100-fold against phage T5, offers no protection against T7 (PubMed:32544385). When the operon is introduced in E.coli MG1655 it protects against phages T2, T4, T5 and T6 (PubMed:36755092). Another paper shows the operon confers protection against phages P1, T2, T5 and T6 but not T4 or lambda (PubMed:36848932).</text>
</comment>
<comment type="catalytic activity">
    <reaction evidence="3">
        <text>a 1,2-diacyl-sn-glycero-3-phosphocholine + H2O = a 2-acyl-sn-glycero-3-phosphocholine + a fatty acid + H(+)</text>
        <dbReference type="Rhea" id="RHEA:18689"/>
        <dbReference type="ChEBI" id="CHEBI:15377"/>
        <dbReference type="ChEBI" id="CHEBI:15378"/>
        <dbReference type="ChEBI" id="CHEBI:28868"/>
        <dbReference type="ChEBI" id="CHEBI:57643"/>
        <dbReference type="ChEBI" id="CHEBI:57875"/>
        <dbReference type="EC" id="3.1.1.32"/>
    </reaction>
    <physiologicalReaction direction="left-to-right" evidence="14">
        <dbReference type="Rhea" id="RHEA:18690"/>
    </physiologicalReaction>
</comment>
<comment type="catalytic activity">
    <reaction evidence="2">
        <text>1,2-di-(9Z-octadecenoyl)-sn-glycero-3-phosphoethanolamine + 2 H2O = sn-glycero-3-phosphoethanolamine + 2 (9Z)-octadecenoate + 2 H(+)</text>
        <dbReference type="Rhea" id="RHEA:60624"/>
        <dbReference type="ChEBI" id="CHEBI:15377"/>
        <dbReference type="ChEBI" id="CHEBI:15378"/>
        <dbReference type="ChEBI" id="CHEBI:30823"/>
        <dbReference type="ChEBI" id="CHEBI:74986"/>
        <dbReference type="ChEBI" id="CHEBI:143890"/>
    </reaction>
    <physiologicalReaction direction="left-to-right" evidence="13">
        <dbReference type="Rhea" id="RHEA:60625"/>
    </physiologicalReaction>
</comment>
<comment type="activity regulation">
    <text evidence="2 3 8">Phospholipase activity is specifically activated upon 3',3'-cGAMP (cGAMP) binding. Is not activated by the other cyclic dinucleotides 3',3'-cUAMP, 3',3'-c-diAMP and 3',3'-c-diGMP. Therefore, is specifically activated by only the nucleotide synthesized from its adjacently encoded nucleotidyltransferase (DncV) (PubMed:29891656, PubMed:30787435). The cGAMP-activation of lipase is inhibited by T4 phage protein Acb2 (Vs.4) (PubMed:36848932).</text>
</comment>
<comment type="induction">
    <text evidence="15">Part of a CBASS operon consisting of capV-dncV-cap2-cap3.</text>
</comment>
<comment type="disruption phenotype">
    <text evidence="2">Deletion of capV suppresses cGAMP-dependent growth phenotypes resulting from overexpression of dncV (PubMed:29891656).</text>
</comment>
<comment type="similarity">
    <text evidence="12">Belongs to the patatin family.</text>
</comment>
<evidence type="ECO:0000255" key="1">
    <source>
        <dbReference type="PROSITE-ProRule" id="PRU01161"/>
    </source>
</evidence>
<evidence type="ECO:0000269" key="2">
    <source>
    </source>
</evidence>
<evidence type="ECO:0000269" key="3">
    <source>
    </source>
</evidence>
<evidence type="ECO:0000269" key="4">
    <source>
    </source>
</evidence>
<evidence type="ECO:0000269" key="5">
    <source>
    </source>
</evidence>
<evidence type="ECO:0000269" key="6">
    <source>
    </source>
</evidence>
<evidence type="ECO:0000269" key="7">
    <source>
    </source>
</evidence>
<evidence type="ECO:0000269" key="8">
    <source>
    </source>
</evidence>
<evidence type="ECO:0000303" key="9">
    <source>
    </source>
</evidence>
<evidence type="ECO:0000303" key="10">
    <source>
    </source>
</evidence>
<evidence type="ECO:0000303" key="11">
    <source>
    </source>
</evidence>
<evidence type="ECO:0000305" key="12"/>
<evidence type="ECO:0000305" key="13">
    <source>
    </source>
</evidence>
<evidence type="ECO:0000305" key="14">
    <source>
    </source>
</evidence>
<evidence type="ECO:0000305" key="15">
    <source>
    </source>
</evidence>
<evidence type="ECO:0000312" key="16">
    <source>
        <dbReference type="EMBL" id="AAF93354.1"/>
    </source>
</evidence>
<accession>Q9KVG8</accession>
<gene>
    <name evidence="9 10" type="primary">capV</name>
    <name evidence="16" type="ordered locus">VC_0178</name>
</gene>
<dbReference type="EC" id="3.1.1.-" evidence="2"/>
<dbReference type="EC" id="3.1.1.32" evidence="3"/>
<dbReference type="EMBL" id="AE003852">
    <property type="protein sequence ID" value="AAF93354.1"/>
    <property type="molecule type" value="Genomic_DNA"/>
</dbReference>
<dbReference type="PIR" id="E82354">
    <property type="entry name" value="E82354"/>
</dbReference>
<dbReference type="RefSeq" id="NP_229835.1">
    <property type="nucleotide sequence ID" value="NC_002505.1"/>
</dbReference>
<dbReference type="RefSeq" id="WP_001133548.1">
    <property type="nucleotide sequence ID" value="NZ_LT906614.1"/>
</dbReference>
<dbReference type="SMR" id="Q9KVG8"/>
<dbReference type="STRING" id="243277.VC_0178"/>
<dbReference type="DNASU" id="2614189"/>
<dbReference type="EnsemblBacteria" id="AAF93354">
    <property type="protein sequence ID" value="AAF93354"/>
    <property type="gene ID" value="VC_0178"/>
</dbReference>
<dbReference type="KEGG" id="vch:VC_0178"/>
<dbReference type="PATRIC" id="fig|243277.26.peg.162"/>
<dbReference type="eggNOG" id="COG3621">
    <property type="taxonomic scope" value="Bacteria"/>
</dbReference>
<dbReference type="HOGENOM" id="CLU_000288_144_9_6"/>
<dbReference type="BioCyc" id="MetaCyc:FY484_RS00960-MONOMER"/>
<dbReference type="Proteomes" id="UP000000584">
    <property type="component" value="Chromosome 1"/>
</dbReference>
<dbReference type="GO" id="GO:0008970">
    <property type="term" value="F:phospholipase A1 activity"/>
    <property type="evidence" value="ECO:0007669"/>
    <property type="project" value="UniProtKB-EC"/>
</dbReference>
<dbReference type="GO" id="GO:0051607">
    <property type="term" value="P:defense response to virus"/>
    <property type="evidence" value="ECO:0007669"/>
    <property type="project" value="UniProtKB-KW"/>
</dbReference>
<dbReference type="GO" id="GO:0016042">
    <property type="term" value="P:lipid catabolic process"/>
    <property type="evidence" value="ECO:0007669"/>
    <property type="project" value="UniProtKB-KW"/>
</dbReference>
<dbReference type="CDD" id="cd07199">
    <property type="entry name" value="Pat17_PNPLA8_PNPLA9_like"/>
    <property type="match status" value="1"/>
</dbReference>
<dbReference type="Gene3D" id="3.40.1090.10">
    <property type="entry name" value="Cytosolic phospholipase A2 catalytic domain"/>
    <property type="match status" value="1"/>
</dbReference>
<dbReference type="InterPro" id="IPR016035">
    <property type="entry name" value="Acyl_Trfase/lysoPLipase"/>
</dbReference>
<dbReference type="InterPro" id="IPR002641">
    <property type="entry name" value="PNPLA_dom"/>
</dbReference>
<dbReference type="NCBIfam" id="NF041079">
    <property type="entry name" value="CBASS_lipase"/>
    <property type="match status" value="1"/>
</dbReference>
<dbReference type="PANTHER" id="PTHR32176">
    <property type="entry name" value="XYLOSE ISOMERASE"/>
    <property type="match status" value="1"/>
</dbReference>
<dbReference type="PANTHER" id="PTHR32176:SF92">
    <property type="entry name" value="XYLOSE ISOMERASE"/>
    <property type="match status" value="1"/>
</dbReference>
<dbReference type="Pfam" id="PF01734">
    <property type="entry name" value="Patatin"/>
    <property type="match status" value="1"/>
</dbReference>
<dbReference type="SUPFAM" id="SSF52151">
    <property type="entry name" value="FabD/lysophospholipase-like"/>
    <property type="match status" value="1"/>
</dbReference>
<dbReference type="PROSITE" id="PS51635">
    <property type="entry name" value="PNPLA"/>
    <property type="match status" value="1"/>
</dbReference>